<dbReference type="EC" id="4.2.1.11"/>
<dbReference type="EMBL" id="Z73637">
    <property type="protein sequence ID" value="CAA98018.1"/>
    <property type="molecule type" value="Genomic_DNA"/>
</dbReference>
<dbReference type="EMBL" id="BK006949">
    <property type="protein sequence ID" value="DAA11157.1"/>
    <property type="molecule type" value="Genomic_DNA"/>
</dbReference>
<dbReference type="PIR" id="S67305">
    <property type="entry name" value="S67305"/>
</dbReference>
<dbReference type="RefSeq" id="NP_015042.1">
    <property type="nucleotide sequence ID" value="NM_001184095.1"/>
</dbReference>
<dbReference type="SMR" id="P0CX11"/>
<dbReference type="BioGRID" id="34773">
    <property type="interactions" value="122"/>
</dbReference>
<dbReference type="BioGRID" id="35934">
    <property type="interactions" value="9"/>
</dbReference>
<dbReference type="FunCoup" id="P0CX11">
    <property type="interactions" value="785"/>
</dbReference>
<dbReference type="EnsemblFungi" id="YOR393W_mRNA">
    <property type="protein sequence ID" value="YOR393W"/>
    <property type="gene ID" value="YOR393W"/>
</dbReference>
<dbReference type="EnsemblFungi" id="YPL281C_mRNA">
    <property type="protein sequence ID" value="YPL281C"/>
    <property type="gene ID" value="YPL281C"/>
</dbReference>
<dbReference type="GeneID" id="855848"/>
<dbReference type="KEGG" id="sce:YOR393W"/>
<dbReference type="KEGG" id="sce:YPL281C"/>
<dbReference type="AGR" id="SGD:S000006202"/>
<dbReference type="SGD" id="S000006202">
    <property type="gene designation" value="ERR2"/>
</dbReference>
<dbReference type="VEuPathDB" id="FungiDB:YOR393W"/>
<dbReference type="VEuPathDB" id="FungiDB:YPL281C"/>
<dbReference type="GeneTree" id="ENSGT00950000182805"/>
<dbReference type="HOGENOM" id="CLU_031223_0_0_1"/>
<dbReference type="InParanoid" id="P0CX11"/>
<dbReference type="OMA" id="VDICCSD"/>
<dbReference type="OrthoDB" id="1739814at2759"/>
<dbReference type="BioCyc" id="YEAST:YPL281C-MONOMER"/>
<dbReference type="Reactome" id="R-SCE-70171">
    <property type="pathway name" value="Glycolysis"/>
</dbReference>
<dbReference type="Reactome" id="R-SCE-70263">
    <property type="pathway name" value="Gluconeogenesis"/>
</dbReference>
<dbReference type="SABIO-RK" id="P0CX11"/>
<dbReference type="UniPathway" id="UPA00109">
    <property type="reaction ID" value="UER00187"/>
</dbReference>
<dbReference type="PRO" id="PR:P0CX11"/>
<dbReference type="Proteomes" id="UP000002311">
    <property type="component" value="Chromosome XVI"/>
</dbReference>
<dbReference type="RNAct" id="P0CX11">
    <property type="molecule type" value="protein"/>
</dbReference>
<dbReference type="ExpressionAtlas" id="P0CX11">
    <property type="expression patterns" value="baseline and differential"/>
</dbReference>
<dbReference type="GO" id="GO:0000015">
    <property type="term" value="C:phosphopyruvate hydratase complex"/>
    <property type="evidence" value="ECO:0000318"/>
    <property type="project" value="GO_Central"/>
</dbReference>
<dbReference type="GO" id="GO:0000287">
    <property type="term" value="F:magnesium ion binding"/>
    <property type="evidence" value="ECO:0007669"/>
    <property type="project" value="InterPro"/>
</dbReference>
<dbReference type="GO" id="GO:0004634">
    <property type="term" value="F:phosphopyruvate hydratase activity"/>
    <property type="evidence" value="ECO:0000314"/>
    <property type="project" value="SGD"/>
</dbReference>
<dbReference type="GO" id="GO:0006096">
    <property type="term" value="P:glycolytic process"/>
    <property type="evidence" value="ECO:0000318"/>
    <property type="project" value="GO_Central"/>
</dbReference>
<dbReference type="CDD" id="cd03313">
    <property type="entry name" value="enolase"/>
    <property type="match status" value="1"/>
</dbReference>
<dbReference type="FunFam" id="3.30.390.10:FF:000001">
    <property type="entry name" value="Enolase"/>
    <property type="match status" value="1"/>
</dbReference>
<dbReference type="FunFam" id="3.20.20.120:FF:000002">
    <property type="entry name" value="Enolase 1"/>
    <property type="match status" value="1"/>
</dbReference>
<dbReference type="Gene3D" id="3.20.20.120">
    <property type="entry name" value="Enolase-like C-terminal domain"/>
    <property type="match status" value="1"/>
</dbReference>
<dbReference type="Gene3D" id="3.30.390.10">
    <property type="entry name" value="Enolase-like, N-terminal domain"/>
    <property type="match status" value="1"/>
</dbReference>
<dbReference type="HAMAP" id="MF_00318">
    <property type="entry name" value="Enolase"/>
    <property type="match status" value="1"/>
</dbReference>
<dbReference type="InterPro" id="IPR000941">
    <property type="entry name" value="Enolase"/>
</dbReference>
<dbReference type="InterPro" id="IPR036849">
    <property type="entry name" value="Enolase-like_C_sf"/>
</dbReference>
<dbReference type="InterPro" id="IPR029017">
    <property type="entry name" value="Enolase-like_N"/>
</dbReference>
<dbReference type="InterPro" id="IPR020810">
    <property type="entry name" value="Enolase_C"/>
</dbReference>
<dbReference type="InterPro" id="IPR020809">
    <property type="entry name" value="Enolase_CS"/>
</dbReference>
<dbReference type="InterPro" id="IPR020811">
    <property type="entry name" value="Enolase_N"/>
</dbReference>
<dbReference type="NCBIfam" id="TIGR01060">
    <property type="entry name" value="eno"/>
    <property type="match status" value="1"/>
</dbReference>
<dbReference type="PANTHER" id="PTHR11902">
    <property type="entry name" value="ENOLASE"/>
    <property type="match status" value="1"/>
</dbReference>
<dbReference type="PANTHER" id="PTHR11902:SF1">
    <property type="entry name" value="ENOLASE"/>
    <property type="match status" value="1"/>
</dbReference>
<dbReference type="Pfam" id="PF00113">
    <property type="entry name" value="Enolase_C"/>
    <property type="match status" value="1"/>
</dbReference>
<dbReference type="Pfam" id="PF03952">
    <property type="entry name" value="Enolase_N"/>
    <property type="match status" value="1"/>
</dbReference>
<dbReference type="PIRSF" id="PIRSF001400">
    <property type="entry name" value="Enolase"/>
    <property type="match status" value="1"/>
</dbReference>
<dbReference type="PRINTS" id="PR00148">
    <property type="entry name" value="ENOLASE"/>
</dbReference>
<dbReference type="SFLD" id="SFLDS00001">
    <property type="entry name" value="Enolase"/>
    <property type="match status" value="1"/>
</dbReference>
<dbReference type="SFLD" id="SFLDF00002">
    <property type="entry name" value="enolase"/>
    <property type="match status" value="1"/>
</dbReference>
<dbReference type="SMART" id="SM01192">
    <property type="entry name" value="Enolase_C"/>
    <property type="match status" value="1"/>
</dbReference>
<dbReference type="SMART" id="SM01193">
    <property type="entry name" value="Enolase_N"/>
    <property type="match status" value="1"/>
</dbReference>
<dbReference type="SUPFAM" id="SSF51604">
    <property type="entry name" value="Enolase C-terminal domain-like"/>
    <property type="match status" value="1"/>
</dbReference>
<dbReference type="SUPFAM" id="SSF54826">
    <property type="entry name" value="Enolase N-terminal domain-like"/>
    <property type="match status" value="1"/>
</dbReference>
<dbReference type="PROSITE" id="PS00164">
    <property type="entry name" value="ENOLASE"/>
    <property type="match status" value="1"/>
</dbReference>
<reference key="1">
    <citation type="journal article" date="1997" name="Nature">
        <title>The nucleotide sequence of Saccharomyces cerevisiae chromosome XVI.</title>
        <authorList>
            <person name="Bussey H."/>
            <person name="Storms R.K."/>
            <person name="Ahmed A."/>
            <person name="Albermann K."/>
            <person name="Allen E."/>
            <person name="Ansorge W."/>
            <person name="Araujo R."/>
            <person name="Aparicio A."/>
            <person name="Barrell B.G."/>
            <person name="Badcock K."/>
            <person name="Benes V."/>
            <person name="Botstein D."/>
            <person name="Bowman S."/>
            <person name="Brueckner M."/>
            <person name="Carpenter J."/>
            <person name="Cherry J.M."/>
            <person name="Chung E."/>
            <person name="Churcher C.M."/>
            <person name="Coster F."/>
            <person name="Davis K."/>
            <person name="Davis R.W."/>
            <person name="Dietrich F.S."/>
            <person name="Delius H."/>
            <person name="DiPaolo T."/>
            <person name="Dubois E."/>
            <person name="Duesterhoeft A."/>
            <person name="Duncan M."/>
            <person name="Floeth M."/>
            <person name="Fortin N."/>
            <person name="Friesen J.D."/>
            <person name="Fritz C."/>
            <person name="Goffeau A."/>
            <person name="Hall J."/>
            <person name="Hebling U."/>
            <person name="Heumann K."/>
            <person name="Hilbert H."/>
            <person name="Hillier L.W."/>
            <person name="Hunicke-Smith S."/>
            <person name="Hyman R.W."/>
            <person name="Johnston M."/>
            <person name="Kalman S."/>
            <person name="Kleine K."/>
            <person name="Komp C."/>
            <person name="Kurdi O."/>
            <person name="Lashkari D."/>
            <person name="Lew H."/>
            <person name="Lin A."/>
            <person name="Lin D."/>
            <person name="Louis E.J."/>
            <person name="Marathe R."/>
            <person name="Messenguy F."/>
            <person name="Mewes H.-W."/>
            <person name="Mirtipati S."/>
            <person name="Moestl D."/>
            <person name="Mueller-Auer S."/>
            <person name="Namath A."/>
            <person name="Nentwich U."/>
            <person name="Oefner P."/>
            <person name="Pearson D."/>
            <person name="Petel F.X."/>
            <person name="Pohl T.M."/>
            <person name="Purnelle B."/>
            <person name="Rajandream M.A."/>
            <person name="Rechmann S."/>
            <person name="Rieger M."/>
            <person name="Riles L."/>
            <person name="Roberts D."/>
            <person name="Schaefer M."/>
            <person name="Scharfe M."/>
            <person name="Scherens B."/>
            <person name="Schramm S."/>
            <person name="Schroeder M."/>
            <person name="Sdicu A.-M."/>
            <person name="Tettelin H."/>
            <person name="Urrestarazu L.A."/>
            <person name="Ushinsky S."/>
            <person name="Vierendeels F."/>
            <person name="Vissers S."/>
            <person name="Voss H."/>
            <person name="Walsh S.V."/>
            <person name="Wambutt R."/>
            <person name="Wang Y."/>
            <person name="Wedler E."/>
            <person name="Wedler H."/>
            <person name="Winnett E."/>
            <person name="Zhong W.-W."/>
            <person name="Zollner A."/>
            <person name="Vo D.H."/>
            <person name="Hani J."/>
        </authorList>
    </citation>
    <scope>NUCLEOTIDE SEQUENCE [LARGE SCALE GENOMIC DNA]</scope>
    <source>
        <strain>ATCC 204508 / S288c</strain>
    </source>
</reference>
<reference key="2">
    <citation type="journal article" date="2014" name="G3 (Bethesda)">
        <title>The reference genome sequence of Saccharomyces cerevisiae: Then and now.</title>
        <authorList>
            <person name="Engel S.R."/>
            <person name="Dietrich F.S."/>
            <person name="Fisk D.G."/>
            <person name="Binkley G."/>
            <person name="Balakrishnan R."/>
            <person name="Costanzo M.C."/>
            <person name="Dwight S.S."/>
            <person name="Hitz B.C."/>
            <person name="Karra K."/>
            <person name="Nash R.S."/>
            <person name="Weng S."/>
            <person name="Wong E.D."/>
            <person name="Lloyd P."/>
            <person name="Skrzypek M.S."/>
            <person name="Miyasato S.R."/>
            <person name="Simison M."/>
            <person name="Cherry J.M."/>
        </authorList>
    </citation>
    <scope>GENOME REANNOTATION</scope>
    <source>
        <strain>ATCC 204508 / S288c</strain>
    </source>
</reference>
<evidence type="ECO:0000250" key="1"/>
<evidence type="ECO:0000305" key="2"/>
<proteinExistence type="inferred from homology"/>
<feature type="chain" id="PRO_0000409749" description="Enolase-related protein 2">
    <location>
        <begin position="1"/>
        <end position="437"/>
    </location>
</feature>
<feature type="active site" description="Proton donor" evidence="1">
    <location>
        <position position="212"/>
    </location>
</feature>
<feature type="active site" description="Proton acceptor" evidence="1">
    <location>
        <position position="346"/>
    </location>
</feature>
<feature type="binding site" evidence="1">
    <location>
        <position position="160"/>
    </location>
    <ligand>
        <name>substrate</name>
    </ligand>
</feature>
<feature type="binding site" evidence="1">
    <location>
        <position position="169"/>
    </location>
    <ligand>
        <name>substrate</name>
    </ligand>
</feature>
<feature type="binding site" evidence="1">
    <location>
        <position position="247"/>
    </location>
    <ligand>
        <name>Mg(2+)</name>
        <dbReference type="ChEBI" id="CHEBI:18420"/>
    </ligand>
</feature>
<feature type="binding site" evidence="1">
    <location>
        <position position="296"/>
    </location>
    <ligand>
        <name>Mg(2+)</name>
        <dbReference type="ChEBI" id="CHEBI:18420"/>
    </ligand>
</feature>
<feature type="binding site" evidence="1">
    <location>
        <position position="296"/>
    </location>
    <ligand>
        <name>substrate</name>
    </ligand>
</feature>
<feature type="binding site" evidence="1">
    <location>
        <position position="321"/>
    </location>
    <ligand>
        <name>Mg(2+)</name>
        <dbReference type="ChEBI" id="CHEBI:18420"/>
    </ligand>
</feature>
<feature type="binding site" evidence="1">
    <location>
        <position position="321"/>
    </location>
    <ligand>
        <name>substrate</name>
    </ligand>
</feature>
<feature type="binding site" evidence="1">
    <location>
        <begin position="373"/>
        <end position="376"/>
    </location>
    <ligand>
        <name>substrate</name>
    </ligand>
</feature>
<feature type="binding site" evidence="1">
    <location>
        <position position="397"/>
    </location>
    <ligand>
        <name>substrate</name>
    </ligand>
</feature>
<keyword id="KW-0324">Glycolysis</keyword>
<keyword id="KW-0456">Lyase</keyword>
<keyword id="KW-0460">Magnesium</keyword>
<keyword id="KW-0479">Metal-binding</keyword>
<keyword id="KW-1185">Reference proteome</keyword>
<name>ERR2_YEAST</name>
<protein>
    <recommendedName>
        <fullName>Enolase-related protein 2</fullName>
        <ecNumber>4.2.1.11</ecNumber>
    </recommendedName>
    <alternativeName>
        <fullName>2-phospho-D-glycerate hydro-lyase</fullName>
    </alternativeName>
    <alternativeName>
        <fullName>2-phosphoglycerate dehydratase</fullName>
    </alternativeName>
</protein>
<sequence>MSITKVHARTVYDSRGNPTVEVEITTENGLFRAIVPSGASTGIHEAVELRDGNKSEWMGKGVTKAVSNVNSIIGPALIKSELCVTNQKGIDELMISLDGTSNKSRLGANAILGVSLCVARAAAAQKGITLYKYIAELADARQDPFVIPVPFFNVLNGGAHAGGSLAMQEFKIAPVGAQSFAEAMRMGSEVYHHLKILAKEQYGPSAGNVGDEGGVAPDIDTAEDALDMIVEAINICGYEGRVKVGIDSAPSVFYKDGKYDLNFKEPNSDPSHWLSPAQLAEYYHSLLKKYPIISLEDPYAEDDWSSWSAFLKTVNVQIIADDLTCTNKTRIARAIEEKCANTLLLKLNQIGTLTESIEAANQAFDAGWGVMISHRSGETEDPFIADLVVGLRCGQIKSGALSRSERLAKYNELLRIEEELGDDCIYAGHRFHDGNKL</sequence>
<gene>
    <name type="primary">ERR2</name>
    <name type="ordered locus">YPL281C</name>
</gene>
<organism>
    <name type="scientific">Saccharomyces cerevisiae (strain ATCC 204508 / S288c)</name>
    <name type="common">Baker's yeast</name>
    <dbReference type="NCBI Taxonomy" id="559292"/>
    <lineage>
        <taxon>Eukaryota</taxon>
        <taxon>Fungi</taxon>
        <taxon>Dikarya</taxon>
        <taxon>Ascomycota</taxon>
        <taxon>Saccharomycotina</taxon>
        <taxon>Saccharomycetes</taxon>
        <taxon>Saccharomycetales</taxon>
        <taxon>Saccharomycetaceae</taxon>
        <taxon>Saccharomyces</taxon>
    </lineage>
</organism>
<comment type="catalytic activity">
    <reaction>
        <text>(2R)-2-phosphoglycerate = phosphoenolpyruvate + H2O</text>
        <dbReference type="Rhea" id="RHEA:10164"/>
        <dbReference type="ChEBI" id="CHEBI:15377"/>
        <dbReference type="ChEBI" id="CHEBI:58289"/>
        <dbReference type="ChEBI" id="CHEBI:58702"/>
        <dbReference type="EC" id="4.2.1.11"/>
    </reaction>
</comment>
<comment type="cofactor">
    <cofactor evidence="1">
        <name>Mg(2+)</name>
        <dbReference type="ChEBI" id="CHEBI:18420"/>
    </cofactor>
</comment>
<comment type="pathway">
    <text>Carbohydrate degradation; glycolysis; pyruvate from D-glyceraldehyde 3-phosphate: step 4/5.</text>
</comment>
<comment type="similarity">
    <text evidence="2">Belongs to the enolase family.</text>
</comment>
<accession>P0CX11</accession>
<accession>D6W385</accession>
<accession>Q12007</accession>
<accession>Q7LGJ4</accession>